<accession>Q5WSJ3</accession>
<dbReference type="EC" id="3.5.4.13" evidence="1"/>
<dbReference type="EMBL" id="CR628337">
    <property type="protein sequence ID" value="CAH17129.1"/>
    <property type="molecule type" value="Genomic_DNA"/>
</dbReference>
<dbReference type="RefSeq" id="WP_010948641.1">
    <property type="nucleotide sequence ID" value="NC_006369.1"/>
</dbReference>
<dbReference type="SMR" id="Q5WSJ3"/>
<dbReference type="GeneID" id="57036962"/>
<dbReference type="KEGG" id="lpf:lpl2885"/>
<dbReference type="LegioList" id="lpl2885"/>
<dbReference type="HOGENOM" id="CLU_087476_4_0_6"/>
<dbReference type="UniPathway" id="UPA00610">
    <property type="reaction ID" value="UER00665"/>
</dbReference>
<dbReference type="Proteomes" id="UP000002517">
    <property type="component" value="Chromosome"/>
</dbReference>
<dbReference type="GO" id="GO:0008829">
    <property type="term" value="F:dCTP deaminase activity"/>
    <property type="evidence" value="ECO:0007669"/>
    <property type="project" value="UniProtKB-UniRule"/>
</dbReference>
<dbReference type="GO" id="GO:0000166">
    <property type="term" value="F:nucleotide binding"/>
    <property type="evidence" value="ECO:0007669"/>
    <property type="project" value="UniProtKB-KW"/>
</dbReference>
<dbReference type="GO" id="GO:0006226">
    <property type="term" value="P:dUMP biosynthetic process"/>
    <property type="evidence" value="ECO:0007669"/>
    <property type="project" value="UniProtKB-UniPathway"/>
</dbReference>
<dbReference type="GO" id="GO:0006229">
    <property type="term" value="P:dUTP biosynthetic process"/>
    <property type="evidence" value="ECO:0007669"/>
    <property type="project" value="UniProtKB-UniRule"/>
</dbReference>
<dbReference type="GO" id="GO:0015949">
    <property type="term" value="P:nucleobase-containing small molecule interconversion"/>
    <property type="evidence" value="ECO:0007669"/>
    <property type="project" value="TreeGrafter"/>
</dbReference>
<dbReference type="CDD" id="cd07557">
    <property type="entry name" value="trimeric_dUTPase"/>
    <property type="match status" value="1"/>
</dbReference>
<dbReference type="FunFam" id="2.70.40.10:FF:000001">
    <property type="entry name" value="dCTP deaminase"/>
    <property type="match status" value="1"/>
</dbReference>
<dbReference type="Gene3D" id="2.70.40.10">
    <property type="match status" value="1"/>
</dbReference>
<dbReference type="HAMAP" id="MF_00146">
    <property type="entry name" value="dCTP_deaminase"/>
    <property type="match status" value="1"/>
</dbReference>
<dbReference type="InterPro" id="IPR011962">
    <property type="entry name" value="dCTP_deaminase"/>
</dbReference>
<dbReference type="InterPro" id="IPR036157">
    <property type="entry name" value="dUTPase-like_sf"/>
</dbReference>
<dbReference type="InterPro" id="IPR033704">
    <property type="entry name" value="dUTPase_trimeric"/>
</dbReference>
<dbReference type="NCBIfam" id="TIGR02274">
    <property type="entry name" value="dCTP_deam"/>
    <property type="match status" value="1"/>
</dbReference>
<dbReference type="PANTHER" id="PTHR42680">
    <property type="entry name" value="DCTP DEAMINASE"/>
    <property type="match status" value="1"/>
</dbReference>
<dbReference type="PANTHER" id="PTHR42680:SF3">
    <property type="entry name" value="DCTP DEAMINASE"/>
    <property type="match status" value="1"/>
</dbReference>
<dbReference type="Pfam" id="PF22769">
    <property type="entry name" value="DCD"/>
    <property type="match status" value="1"/>
</dbReference>
<dbReference type="SUPFAM" id="SSF51283">
    <property type="entry name" value="dUTPase-like"/>
    <property type="match status" value="1"/>
</dbReference>
<evidence type="ECO:0000255" key="1">
    <source>
        <dbReference type="HAMAP-Rule" id="MF_00146"/>
    </source>
</evidence>
<protein>
    <recommendedName>
        <fullName evidence="1">dCTP deaminase</fullName>
        <ecNumber evidence="1">3.5.4.13</ecNumber>
    </recommendedName>
    <alternativeName>
        <fullName evidence="1">Deoxycytidine triphosphate deaminase</fullName>
    </alternativeName>
</protein>
<proteinExistence type="inferred from homology"/>
<reference key="1">
    <citation type="journal article" date="2004" name="Nat. Genet.">
        <title>Evidence in the Legionella pneumophila genome for exploitation of host cell functions and high genome plasticity.</title>
        <authorList>
            <person name="Cazalet C."/>
            <person name="Rusniok C."/>
            <person name="Brueggemann H."/>
            <person name="Zidane N."/>
            <person name="Magnier A."/>
            <person name="Ma L."/>
            <person name="Tichit M."/>
            <person name="Jarraud S."/>
            <person name="Bouchier C."/>
            <person name="Vandenesch F."/>
            <person name="Kunst F."/>
            <person name="Etienne J."/>
            <person name="Glaser P."/>
            <person name="Buchrieser C."/>
        </authorList>
    </citation>
    <scope>NUCLEOTIDE SEQUENCE [LARGE SCALE GENOMIC DNA]</scope>
    <source>
        <strain>Lens</strain>
    </source>
</reference>
<comment type="function">
    <text evidence="1">Catalyzes the deamination of dCTP to dUTP.</text>
</comment>
<comment type="catalytic activity">
    <reaction evidence="1">
        <text>dCTP + H2O + H(+) = dUTP + NH4(+)</text>
        <dbReference type="Rhea" id="RHEA:22680"/>
        <dbReference type="ChEBI" id="CHEBI:15377"/>
        <dbReference type="ChEBI" id="CHEBI:15378"/>
        <dbReference type="ChEBI" id="CHEBI:28938"/>
        <dbReference type="ChEBI" id="CHEBI:61481"/>
        <dbReference type="ChEBI" id="CHEBI:61555"/>
        <dbReference type="EC" id="3.5.4.13"/>
    </reaction>
</comment>
<comment type="pathway">
    <text evidence="1">Pyrimidine metabolism; dUMP biosynthesis; dUMP from dCTP (dUTP route): step 1/2.</text>
</comment>
<comment type="subunit">
    <text evidence="1">Homotrimer.</text>
</comment>
<comment type="similarity">
    <text evidence="1">Belongs to the dCTP deaminase family.</text>
</comment>
<name>DCD_LEGPL</name>
<sequence>MSIKSDRWIEKMALEHGMISPFQAGQVRENQNGRIISYGVSSYGYDVRCSNEFKIFTNINSAIVDPKAFDENSFVDVQSDVCIIPPNSFALARTVEYFRIPRNILTICLGKSTYARCGIIVNVTPLEPEWEGHVTLEFSNTTTLPAKIYAYEGVAQMLFLEANEVCAVSYRDRNGKYQGQTGVTLPRT</sequence>
<organism>
    <name type="scientific">Legionella pneumophila (strain Lens)</name>
    <dbReference type="NCBI Taxonomy" id="297245"/>
    <lineage>
        <taxon>Bacteria</taxon>
        <taxon>Pseudomonadati</taxon>
        <taxon>Pseudomonadota</taxon>
        <taxon>Gammaproteobacteria</taxon>
        <taxon>Legionellales</taxon>
        <taxon>Legionellaceae</taxon>
        <taxon>Legionella</taxon>
    </lineage>
</organism>
<keyword id="KW-0378">Hydrolase</keyword>
<keyword id="KW-0546">Nucleotide metabolism</keyword>
<keyword id="KW-0547">Nucleotide-binding</keyword>
<feature type="chain" id="PRO_1000009747" description="dCTP deaminase">
    <location>
        <begin position="1"/>
        <end position="188"/>
    </location>
</feature>
<feature type="active site" description="Proton donor/acceptor" evidence="1">
    <location>
        <position position="137"/>
    </location>
</feature>
<feature type="binding site" evidence="1">
    <location>
        <begin position="111"/>
        <end position="116"/>
    </location>
    <ligand>
        <name>dCTP</name>
        <dbReference type="ChEBI" id="CHEBI:61481"/>
    </ligand>
</feature>
<feature type="binding site" evidence="1">
    <location>
        <begin position="135"/>
        <end position="137"/>
    </location>
    <ligand>
        <name>dCTP</name>
        <dbReference type="ChEBI" id="CHEBI:61481"/>
    </ligand>
</feature>
<feature type="binding site" evidence="1">
    <location>
        <position position="156"/>
    </location>
    <ligand>
        <name>dCTP</name>
        <dbReference type="ChEBI" id="CHEBI:61481"/>
    </ligand>
</feature>
<feature type="binding site" evidence="1">
    <location>
        <position position="170"/>
    </location>
    <ligand>
        <name>dCTP</name>
        <dbReference type="ChEBI" id="CHEBI:61481"/>
    </ligand>
</feature>
<feature type="binding site" evidence="1">
    <location>
        <position position="180"/>
    </location>
    <ligand>
        <name>dCTP</name>
        <dbReference type="ChEBI" id="CHEBI:61481"/>
    </ligand>
</feature>
<gene>
    <name evidence="1" type="primary">dcd</name>
    <name type="ordered locus">lpl2885</name>
</gene>